<evidence type="ECO:0000255" key="1">
    <source>
        <dbReference type="HAMAP-Rule" id="MF_00121"/>
    </source>
</evidence>
<dbReference type="EC" id="6.3.5.-" evidence="1"/>
<dbReference type="EMBL" id="CP000975">
    <property type="protein sequence ID" value="ACD83748.1"/>
    <property type="molecule type" value="Genomic_DNA"/>
</dbReference>
<dbReference type="RefSeq" id="WP_012464030.1">
    <property type="nucleotide sequence ID" value="NC_010794.1"/>
</dbReference>
<dbReference type="SMR" id="B3DWT5"/>
<dbReference type="STRING" id="481448.Minf_1694"/>
<dbReference type="KEGG" id="min:Minf_1694"/>
<dbReference type="eggNOG" id="COG0064">
    <property type="taxonomic scope" value="Bacteria"/>
</dbReference>
<dbReference type="HOGENOM" id="CLU_019240_0_0_0"/>
<dbReference type="OrthoDB" id="9804078at2"/>
<dbReference type="Proteomes" id="UP000009149">
    <property type="component" value="Chromosome"/>
</dbReference>
<dbReference type="GO" id="GO:0050566">
    <property type="term" value="F:asparaginyl-tRNA synthase (glutamine-hydrolyzing) activity"/>
    <property type="evidence" value="ECO:0007669"/>
    <property type="project" value="RHEA"/>
</dbReference>
<dbReference type="GO" id="GO:0005524">
    <property type="term" value="F:ATP binding"/>
    <property type="evidence" value="ECO:0007669"/>
    <property type="project" value="UniProtKB-KW"/>
</dbReference>
<dbReference type="GO" id="GO:0050567">
    <property type="term" value="F:glutaminyl-tRNA synthase (glutamine-hydrolyzing) activity"/>
    <property type="evidence" value="ECO:0007669"/>
    <property type="project" value="UniProtKB-UniRule"/>
</dbReference>
<dbReference type="GO" id="GO:0070681">
    <property type="term" value="P:glutaminyl-tRNAGln biosynthesis via transamidation"/>
    <property type="evidence" value="ECO:0007669"/>
    <property type="project" value="TreeGrafter"/>
</dbReference>
<dbReference type="GO" id="GO:0006412">
    <property type="term" value="P:translation"/>
    <property type="evidence" value="ECO:0007669"/>
    <property type="project" value="UniProtKB-UniRule"/>
</dbReference>
<dbReference type="FunFam" id="1.10.10.410:FF:000001">
    <property type="entry name" value="Aspartyl/glutamyl-tRNA(Asn/Gln) amidotransferase subunit B"/>
    <property type="match status" value="1"/>
</dbReference>
<dbReference type="Gene3D" id="1.10.10.410">
    <property type="match status" value="1"/>
</dbReference>
<dbReference type="Gene3D" id="1.10.150.380">
    <property type="entry name" value="GatB domain, N-terminal subdomain"/>
    <property type="match status" value="1"/>
</dbReference>
<dbReference type="HAMAP" id="MF_00121">
    <property type="entry name" value="GatB"/>
    <property type="match status" value="1"/>
</dbReference>
<dbReference type="InterPro" id="IPR017959">
    <property type="entry name" value="Asn/Gln-tRNA_amidoTrfase_suB/E"/>
</dbReference>
<dbReference type="InterPro" id="IPR006075">
    <property type="entry name" value="Asn/Gln-tRNA_Trfase_suB/E_cat"/>
</dbReference>
<dbReference type="InterPro" id="IPR018027">
    <property type="entry name" value="Asn/Gln_amidotransferase"/>
</dbReference>
<dbReference type="InterPro" id="IPR003789">
    <property type="entry name" value="Asn/Gln_tRNA_amidoTrase-B-like"/>
</dbReference>
<dbReference type="InterPro" id="IPR004413">
    <property type="entry name" value="GatB"/>
</dbReference>
<dbReference type="InterPro" id="IPR042114">
    <property type="entry name" value="GatB_C_1"/>
</dbReference>
<dbReference type="InterPro" id="IPR023168">
    <property type="entry name" value="GatB_Yqey_C_2"/>
</dbReference>
<dbReference type="InterPro" id="IPR017958">
    <property type="entry name" value="Gln-tRNA_amidoTrfase_suB_CS"/>
</dbReference>
<dbReference type="InterPro" id="IPR014746">
    <property type="entry name" value="Gln_synth/guanido_kin_cat_dom"/>
</dbReference>
<dbReference type="NCBIfam" id="TIGR00133">
    <property type="entry name" value="gatB"/>
    <property type="match status" value="1"/>
</dbReference>
<dbReference type="NCBIfam" id="NF004012">
    <property type="entry name" value="PRK05477.1-2"/>
    <property type="match status" value="1"/>
</dbReference>
<dbReference type="NCBIfam" id="NF004014">
    <property type="entry name" value="PRK05477.1-4"/>
    <property type="match status" value="1"/>
</dbReference>
<dbReference type="PANTHER" id="PTHR11659">
    <property type="entry name" value="GLUTAMYL-TRNA GLN AMIDOTRANSFERASE SUBUNIT B MITOCHONDRIAL AND PROKARYOTIC PET112-RELATED"/>
    <property type="match status" value="1"/>
</dbReference>
<dbReference type="PANTHER" id="PTHR11659:SF0">
    <property type="entry name" value="GLUTAMYL-TRNA(GLN) AMIDOTRANSFERASE SUBUNIT B, MITOCHONDRIAL"/>
    <property type="match status" value="1"/>
</dbReference>
<dbReference type="Pfam" id="PF02934">
    <property type="entry name" value="GatB_N"/>
    <property type="match status" value="1"/>
</dbReference>
<dbReference type="Pfam" id="PF02637">
    <property type="entry name" value="GatB_Yqey"/>
    <property type="match status" value="1"/>
</dbReference>
<dbReference type="SMART" id="SM00845">
    <property type="entry name" value="GatB_Yqey"/>
    <property type="match status" value="1"/>
</dbReference>
<dbReference type="SUPFAM" id="SSF89095">
    <property type="entry name" value="GatB/YqeY motif"/>
    <property type="match status" value="1"/>
</dbReference>
<dbReference type="SUPFAM" id="SSF55931">
    <property type="entry name" value="Glutamine synthetase/guanido kinase"/>
    <property type="match status" value="1"/>
</dbReference>
<dbReference type="PROSITE" id="PS01234">
    <property type="entry name" value="GATB"/>
    <property type="match status" value="1"/>
</dbReference>
<name>GATB_METI4</name>
<comment type="function">
    <text evidence="1">Allows the formation of correctly charged Asn-tRNA(Asn) or Gln-tRNA(Gln) through the transamidation of misacylated Asp-tRNA(Asn) or Glu-tRNA(Gln) in organisms which lack either or both of asparaginyl-tRNA or glutaminyl-tRNA synthetases. The reaction takes place in the presence of glutamine and ATP through an activated phospho-Asp-tRNA(Asn) or phospho-Glu-tRNA(Gln).</text>
</comment>
<comment type="catalytic activity">
    <reaction evidence="1">
        <text>L-glutamyl-tRNA(Gln) + L-glutamine + ATP + H2O = L-glutaminyl-tRNA(Gln) + L-glutamate + ADP + phosphate + H(+)</text>
        <dbReference type="Rhea" id="RHEA:17521"/>
        <dbReference type="Rhea" id="RHEA-COMP:9681"/>
        <dbReference type="Rhea" id="RHEA-COMP:9684"/>
        <dbReference type="ChEBI" id="CHEBI:15377"/>
        <dbReference type="ChEBI" id="CHEBI:15378"/>
        <dbReference type="ChEBI" id="CHEBI:29985"/>
        <dbReference type="ChEBI" id="CHEBI:30616"/>
        <dbReference type="ChEBI" id="CHEBI:43474"/>
        <dbReference type="ChEBI" id="CHEBI:58359"/>
        <dbReference type="ChEBI" id="CHEBI:78520"/>
        <dbReference type="ChEBI" id="CHEBI:78521"/>
        <dbReference type="ChEBI" id="CHEBI:456216"/>
    </reaction>
</comment>
<comment type="catalytic activity">
    <reaction evidence="1">
        <text>L-aspartyl-tRNA(Asn) + L-glutamine + ATP + H2O = L-asparaginyl-tRNA(Asn) + L-glutamate + ADP + phosphate + 2 H(+)</text>
        <dbReference type="Rhea" id="RHEA:14513"/>
        <dbReference type="Rhea" id="RHEA-COMP:9674"/>
        <dbReference type="Rhea" id="RHEA-COMP:9677"/>
        <dbReference type="ChEBI" id="CHEBI:15377"/>
        <dbReference type="ChEBI" id="CHEBI:15378"/>
        <dbReference type="ChEBI" id="CHEBI:29985"/>
        <dbReference type="ChEBI" id="CHEBI:30616"/>
        <dbReference type="ChEBI" id="CHEBI:43474"/>
        <dbReference type="ChEBI" id="CHEBI:58359"/>
        <dbReference type="ChEBI" id="CHEBI:78515"/>
        <dbReference type="ChEBI" id="CHEBI:78516"/>
        <dbReference type="ChEBI" id="CHEBI:456216"/>
    </reaction>
</comment>
<comment type="subunit">
    <text evidence="1">Heterotrimer of A, B and C subunits.</text>
</comment>
<comment type="similarity">
    <text evidence="1">Belongs to the GatB/GatE family. GatB subfamily.</text>
</comment>
<gene>
    <name evidence="1" type="primary">gatB</name>
    <name type="ordered locus">Minf_1694</name>
</gene>
<protein>
    <recommendedName>
        <fullName evidence="1">Aspartyl/glutamyl-tRNA(Asn/Gln) amidotransferase subunit B</fullName>
        <shortName evidence="1">Asp/Glu-ADT subunit B</shortName>
        <ecNumber evidence="1">6.3.5.-</ecNumber>
    </recommendedName>
</protein>
<reference key="1">
    <citation type="journal article" date="2008" name="Biol. Direct">
        <title>Complete genome sequence of the extremely acidophilic methanotroph isolate V4, Methylacidiphilum infernorum, a representative of the bacterial phylum Verrucomicrobia.</title>
        <authorList>
            <person name="Hou S."/>
            <person name="Makarova K.S."/>
            <person name="Saw J.H."/>
            <person name="Senin P."/>
            <person name="Ly B.V."/>
            <person name="Zhou Z."/>
            <person name="Ren Y."/>
            <person name="Wang J."/>
            <person name="Galperin M.Y."/>
            <person name="Omelchenko M.V."/>
            <person name="Wolf Y.I."/>
            <person name="Yutin N."/>
            <person name="Koonin E.V."/>
            <person name="Stott M.B."/>
            <person name="Mountain B.W."/>
            <person name="Crowe M.A."/>
            <person name="Smirnova A.V."/>
            <person name="Dunfield P.F."/>
            <person name="Feng L."/>
            <person name="Wang L."/>
            <person name="Alam M."/>
        </authorList>
    </citation>
    <scope>NUCLEOTIDE SEQUENCE [LARGE SCALE GENOMIC DNA]</scope>
    <source>
        <strain>Isolate V4</strain>
    </source>
</reference>
<keyword id="KW-0067">ATP-binding</keyword>
<keyword id="KW-0436">Ligase</keyword>
<keyword id="KW-0547">Nucleotide-binding</keyword>
<keyword id="KW-0648">Protein biosynthesis</keyword>
<accession>B3DWT5</accession>
<sequence>MDYEAIIGLEVHVQLKTQTKLFCGCAVEYGATPNSRVCPVCLGLPGALPSPNKEAIILTIQTGLMLGSEIARRGKFDRKNYFYPDMPKNYQISQYDQPLCKGGSVQLYPLAFPKDAQKDPQAQERKKIRIVRVHLEEDVGKSFHFDENSGIDFNRAGTPLMEIVSEADIRSPEEAFAYLSALRQILRYGNVSDCDMEKGQLRCDVNVSVKPAGEKKWGTKCEIKNLNSISAVRKALKYEIQRQIHVLSTGSKISQETLRWDDLRGQTVPMRTKEYAHDYRYFPDPDLLTVVTEGELVAEAKKRIPELPEQKKQRLCEVYRLNEYQSSVLASDPQLADYFEKAASTASNKVAVANFLINDYLAVASDLETAVPIPAEYFSELSNLVEQGKLHMKQAKEIVKVMVAEKKSPAAIVQEQGIGQITSVEVLQGLCREAIEANPKSVSDYRSGKLAALNALKGYVMKKTKGQANPQIVHDLLEKTLKETG</sequence>
<organism>
    <name type="scientific">Methylacidiphilum infernorum (isolate V4)</name>
    <name type="common">Methylokorus infernorum (strain V4)</name>
    <dbReference type="NCBI Taxonomy" id="481448"/>
    <lineage>
        <taxon>Bacteria</taxon>
        <taxon>Pseudomonadati</taxon>
        <taxon>Verrucomicrobiota</taxon>
        <taxon>Methylacidiphilae</taxon>
        <taxon>Methylacidiphilales</taxon>
        <taxon>Methylacidiphilaceae</taxon>
        <taxon>Methylacidiphilum (ex Ratnadevi et al. 2023)</taxon>
    </lineage>
</organism>
<proteinExistence type="inferred from homology"/>
<feature type="chain" id="PRO_1000095221" description="Aspartyl/glutamyl-tRNA(Asn/Gln) amidotransferase subunit B">
    <location>
        <begin position="1"/>
        <end position="485"/>
    </location>
</feature>